<accession>Q0TPD6</accession>
<comment type="function">
    <text evidence="1">Bidirectionally degrades single-stranded DNA into large acid-insoluble oligonucleotides, which are then degraded further into small acid-soluble oligonucleotides.</text>
</comment>
<comment type="catalytic activity">
    <reaction evidence="1">
        <text>Exonucleolytic cleavage in either 5'- to 3'- or 3'- to 5'-direction to yield nucleoside 5'-phosphates.</text>
        <dbReference type="EC" id="3.1.11.6"/>
    </reaction>
</comment>
<comment type="subunit">
    <text evidence="1">Heterooligomer composed of large and small subunits.</text>
</comment>
<comment type="subcellular location">
    <subcellularLocation>
        <location evidence="1">Cytoplasm</location>
    </subcellularLocation>
</comment>
<comment type="similarity">
    <text evidence="1">Belongs to the XseB family.</text>
</comment>
<protein>
    <recommendedName>
        <fullName evidence="1">Exodeoxyribonuclease 7 small subunit</fullName>
        <ecNumber evidence="1">3.1.11.6</ecNumber>
    </recommendedName>
    <alternativeName>
        <fullName evidence="1">Exodeoxyribonuclease VII small subunit</fullName>
        <shortName evidence="1">Exonuclease VII small subunit</shortName>
    </alternativeName>
</protein>
<gene>
    <name evidence="1" type="primary">xseB</name>
    <name type="ordered locus">CPF_2075</name>
</gene>
<dbReference type="EC" id="3.1.11.6" evidence="1"/>
<dbReference type="EMBL" id="CP000246">
    <property type="protein sequence ID" value="ABG82818.1"/>
    <property type="molecule type" value="Genomic_DNA"/>
</dbReference>
<dbReference type="RefSeq" id="WP_003451121.1">
    <property type="nucleotide sequence ID" value="NC_008261.1"/>
</dbReference>
<dbReference type="SMR" id="Q0TPD6"/>
<dbReference type="STRING" id="195103.CPF_2075"/>
<dbReference type="PaxDb" id="195103-CPF_2075"/>
<dbReference type="KEGG" id="cpf:CPF_2075"/>
<dbReference type="eggNOG" id="COG1722">
    <property type="taxonomic scope" value="Bacteria"/>
</dbReference>
<dbReference type="HOGENOM" id="CLU_145918_3_2_9"/>
<dbReference type="Proteomes" id="UP000001823">
    <property type="component" value="Chromosome"/>
</dbReference>
<dbReference type="GO" id="GO:0005829">
    <property type="term" value="C:cytosol"/>
    <property type="evidence" value="ECO:0007669"/>
    <property type="project" value="TreeGrafter"/>
</dbReference>
<dbReference type="GO" id="GO:0009318">
    <property type="term" value="C:exodeoxyribonuclease VII complex"/>
    <property type="evidence" value="ECO:0007669"/>
    <property type="project" value="InterPro"/>
</dbReference>
<dbReference type="GO" id="GO:0008855">
    <property type="term" value="F:exodeoxyribonuclease VII activity"/>
    <property type="evidence" value="ECO:0007669"/>
    <property type="project" value="UniProtKB-UniRule"/>
</dbReference>
<dbReference type="GO" id="GO:0006308">
    <property type="term" value="P:DNA catabolic process"/>
    <property type="evidence" value="ECO:0007669"/>
    <property type="project" value="UniProtKB-UniRule"/>
</dbReference>
<dbReference type="Gene3D" id="1.10.287.1040">
    <property type="entry name" value="Exonuclease VII, small subunit"/>
    <property type="match status" value="1"/>
</dbReference>
<dbReference type="HAMAP" id="MF_00337">
    <property type="entry name" value="Exonuc_7_S"/>
    <property type="match status" value="1"/>
</dbReference>
<dbReference type="InterPro" id="IPR003761">
    <property type="entry name" value="Exonuc_VII_S"/>
</dbReference>
<dbReference type="InterPro" id="IPR037004">
    <property type="entry name" value="Exonuc_VII_ssu_sf"/>
</dbReference>
<dbReference type="NCBIfam" id="NF002140">
    <property type="entry name" value="PRK00977.1-4"/>
    <property type="match status" value="1"/>
</dbReference>
<dbReference type="NCBIfam" id="TIGR01280">
    <property type="entry name" value="xseB"/>
    <property type="match status" value="1"/>
</dbReference>
<dbReference type="PANTHER" id="PTHR34137">
    <property type="entry name" value="EXODEOXYRIBONUCLEASE 7 SMALL SUBUNIT"/>
    <property type="match status" value="1"/>
</dbReference>
<dbReference type="PANTHER" id="PTHR34137:SF1">
    <property type="entry name" value="EXODEOXYRIBONUCLEASE 7 SMALL SUBUNIT"/>
    <property type="match status" value="1"/>
</dbReference>
<dbReference type="Pfam" id="PF02609">
    <property type="entry name" value="Exonuc_VII_S"/>
    <property type="match status" value="1"/>
</dbReference>
<dbReference type="PIRSF" id="PIRSF006488">
    <property type="entry name" value="Exonuc_VII_S"/>
    <property type="match status" value="1"/>
</dbReference>
<dbReference type="SUPFAM" id="SSF116842">
    <property type="entry name" value="XseB-like"/>
    <property type="match status" value="1"/>
</dbReference>
<evidence type="ECO:0000255" key="1">
    <source>
        <dbReference type="HAMAP-Rule" id="MF_00337"/>
    </source>
</evidence>
<sequence length="75" mass="8669">MARKETNYESMVSELNEIVKQLENGDLTLEESIKSYENGVKIVNKLYKKLSTLEGKIKVVEDEKEEDFGGYSNEY</sequence>
<keyword id="KW-0963">Cytoplasm</keyword>
<keyword id="KW-0269">Exonuclease</keyword>
<keyword id="KW-0378">Hydrolase</keyword>
<keyword id="KW-0540">Nuclease</keyword>
<proteinExistence type="inferred from homology"/>
<organism>
    <name type="scientific">Clostridium perfringens (strain ATCC 13124 / DSM 756 / JCM 1290 / NCIMB 6125 / NCTC 8237 / Type A)</name>
    <dbReference type="NCBI Taxonomy" id="195103"/>
    <lineage>
        <taxon>Bacteria</taxon>
        <taxon>Bacillati</taxon>
        <taxon>Bacillota</taxon>
        <taxon>Clostridia</taxon>
        <taxon>Eubacteriales</taxon>
        <taxon>Clostridiaceae</taxon>
        <taxon>Clostridium</taxon>
    </lineage>
</organism>
<name>EX7S_CLOP1</name>
<feature type="chain" id="PRO_0000303702" description="Exodeoxyribonuclease 7 small subunit">
    <location>
        <begin position="1"/>
        <end position="75"/>
    </location>
</feature>
<reference key="1">
    <citation type="journal article" date="2006" name="Genome Res.">
        <title>Skewed genomic variability in strains of the toxigenic bacterial pathogen, Clostridium perfringens.</title>
        <authorList>
            <person name="Myers G.S.A."/>
            <person name="Rasko D.A."/>
            <person name="Cheung J.K."/>
            <person name="Ravel J."/>
            <person name="Seshadri R."/>
            <person name="DeBoy R.T."/>
            <person name="Ren Q."/>
            <person name="Varga J."/>
            <person name="Awad M.M."/>
            <person name="Brinkac L.M."/>
            <person name="Daugherty S.C."/>
            <person name="Haft D.H."/>
            <person name="Dodson R.J."/>
            <person name="Madupu R."/>
            <person name="Nelson W.C."/>
            <person name="Rosovitz M.J."/>
            <person name="Sullivan S.A."/>
            <person name="Khouri H."/>
            <person name="Dimitrov G.I."/>
            <person name="Watkins K.L."/>
            <person name="Mulligan S."/>
            <person name="Benton J."/>
            <person name="Radune D."/>
            <person name="Fisher D.J."/>
            <person name="Atkins H.S."/>
            <person name="Hiscox T."/>
            <person name="Jost B.H."/>
            <person name="Billington S.J."/>
            <person name="Songer J.G."/>
            <person name="McClane B.A."/>
            <person name="Titball R.W."/>
            <person name="Rood J.I."/>
            <person name="Melville S.B."/>
            <person name="Paulsen I.T."/>
        </authorList>
    </citation>
    <scope>NUCLEOTIDE SEQUENCE [LARGE SCALE GENOMIC DNA]</scope>
    <source>
        <strain>ATCC 13124 / DSM 756 / JCM 1290 / NCIMB 6125 / NCTC 8237 / S 107 / Type A</strain>
    </source>
</reference>